<name>ANMK_SHEWM</name>
<accession>B1KI25</accession>
<proteinExistence type="inferred from homology"/>
<organism>
    <name type="scientific">Shewanella woodyi (strain ATCC 51908 / MS32)</name>
    <dbReference type="NCBI Taxonomy" id="392500"/>
    <lineage>
        <taxon>Bacteria</taxon>
        <taxon>Pseudomonadati</taxon>
        <taxon>Pseudomonadota</taxon>
        <taxon>Gammaproteobacteria</taxon>
        <taxon>Alteromonadales</taxon>
        <taxon>Shewanellaceae</taxon>
        <taxon>Shewanella</taxon>
    </lineage>
</organism>
<keyword id="KW-0067">ATP-binding</keyword>
<keyword id="KW-0119">Carbohydrate metabolism</keyword>
<keyword id="KW-0418">Kinase</keyword>
<keyword id="KW-0547">Nucleotide-binding</keyword>
<keyword id="KW-1185">Reference proteome</keyword>
<keyword id="KW-0808">Transferase</keyword>
<dbReference type="EC" id="2.7.1.170" evidence="1"/>
<dbReference type="EMBL" id="CP000961">
    <property type="protein sequence ID" value="ACA85503.1"/>
    <property type="molecule type" value="Genomic_DNA"/>
</dbReference>
<dbReference type="RefSeq" id="WP_012323849.1">
    <property type="nucleotide sequence ID" value="NC_010506.1"/>
</dbReference>
<dbReference type="SMR" id="B1KI25"/>
<dbReference type="STRING" id="392500.Swoo_1210"/>
<dbReference type="KEGG" id="swd:Swoo_1210"/>
<dbReference type="eggNOG" id="COG2377">
    <property type="taxonomic scope" value="Bacteria"/>
</dbReference>
<dbReference type="HOGENOM" id="CLU_038782_0_0_6"/>
<dbReference type="UniPathway" id="UPA00343"/>
<dbReference type="UniPathway" id="UPA00544"/>
<dbReference type="Proteomes" id="UP000002168">
    <property type="component" value="Chromosome"/>
</dbReference>
<dbReference type="GO" id="GO:0005524">
    <property type="term" value="F:ATP binding"/>
    <property type="evidence" value="ECO:0007669"/>
    <property type="project" value="UniProtKB-UniRule"/>
</dbReference>
<dbReference type="GO" id="GO:0016301">
    <property type="term" value="F:kinase activity"/>
    <property type="evidence" value="ECO:0007669"/>
    <property type="project" value="UniProtKB-KW"/>
</dbReference>
<dbReference type="GO" id="GO:0016773">
    <property type="term" value="F:phosphotransferase activity, alcohol group as acceptor"/>
    <property type="evidence" value="ECO:0007669"/>
    <property type="project" value="UniProtKB-UniRule"/>
</dbReference>
<dbReference type="GO" id="GO:0097175">
    <property type="term" value="P:1,6-anhydro-N-acetyl-beta-muramic acid catabolic process"/>
    <property type="evidence" value="ECO:0007669"/>
    <property type="project" value="UniProtKB-UniRule"/>
</dbReference>
<dbReference type="GO" id="GO:0006040">
    <property type="term" value="P:amino sugar metabolic process"/>
    <property type="evidence" value="ECO:0007669"/>
    <property type="project" value="InterPro"/>
</dbReference>
<dbReference type="GO" id="GO:0009254">
    <property type="term" value="P:peptidoglycan turnover"/>
    <property type="evidence" value="ECO:0007669"/>
    <property type="project" value="UniProtKB-UniRule"/>
</dbReference>
<dbReference type="CDD" id="cd24050">
    <property type="entry name" value="ASKHA_NBD_ANMK"/>
    <property type="match status" value="1"/>
</dbReference>
<dbReference type="Gene3D" id="3.30.420.40">
    <property type="match status" value="2"/>
</dbReference>
<dbReference type="HAMAP" id="MF_01270">
    <property type="entry name" value="AnhMurNAc_kinase"/>
    <property type="match status" value="1"/>
</dbReference>
<dbReference type="InterPro" id="IPR005338">
    <property type="entry name" value="Anhydro_N_Ac-Mur_kinase"/>
</dbReference>
<dbReference type="InterPro" id="IPR043129">
    <property type="entry name" value="ATPase_NBD"/>
</dbReference>
<dbReference type="NCBIfam" id="NF007139">
    <property type="entry name" value="PRK09585.1-3"/>
    <property type="match status" value="1"/>
</dbReference>
<dbReference type="NCBIfam" id="NF007148">
    <property type="entry name" value="PRK09585.3-2"/>
    <property type="match status" value="1"/>
</dbReference>
<dbReference type="PANTHER" id="PTHR30605">
    <property type="entry name" value="ANHYDRO-N-ACETYLMURAMIC ACID KINASE"/>
    <property type="match status" value="1"/>
</dbReference>
<dbReference type="PANTHER" id="PTHR30605:SF0">
    <property type="entry name" value="ANHYDRO-N-ACETYLMURAMIC ACID KINASE"/>
    <property type="match status" value="1"/>
</dbReference>
<dbReference type="Pfam" id="PF03702">
    <property type="entry name" value="AnmK"/>
    <property type="match status" value="1"/>
</dbReference>
<dbReference type="SUPFAM" id="SSF53067">
    <property type="entry name" value="Actin-like ATPase domain"/>
    <property type="match status" value="1"/>
</dbReference>
<gene>
    <name evidence="1" type="primary">anmK</name>
    <name type="ordered locus">Swoo_1210</name>
</gene>
<reference key="1">
    <citation type="submission" date="2008-02" db="EMBL/GenBank/DDBJ databases">
        <title>Complete sequence of Shewanella woodyi ATCC 51908.</title>
        <authorList>
            <consortium name="US DOE Joint Genome Institute"/>
            <person name="Copeland A."/>
            <person name="Lucas S."/>
            <person name="Lapidus A."/>
            <person name="Glavina del Rio T."/>
            <person name="Dalin E."/>
            <person name="Tice H."/>
            <person name="Bruce D."/>
            <person name="Goodwin L."/>
            <person name="Pitluck S."/>
            <person name="Sims D."/>
            <person name="Brettin T."/>
            <person name="Detter J.C."/>
            <person name="Han C."/>
            <person name="Kuske C.R."/>
            <person name="Schmutz J."/>
            <person name="Larimer F."/>
            <person name="Land M."/>
            <person name="Hauser L."/>
            <person name="Kyrpides N."/>
            <person name="Lykidis A."/>
            <person name="Zhao J.-S."/>
            <person name="Richardson P."/>
        </authorList>
    </citation>
    <scope>NUCLEOTIDE SEQUENCE [LARGE SCALE GENOMIC DNA]</scope>
    <source>
        <strain>ATCC 51908 / MS32</strain>
    </source>
</reference>
<feature type="chain" id="PRO_1000140176" description="Anhydro-N-acetylmuramic acid kinase">
    <location>
        <begin position="1"/>
        <end position="369"/>
    </location>
</feature>
<feature type="binding site" evidence="1">
    <location>
        <begin position="12"/>
        <end position="19"/>
    </location>
    <ligand>
        <name>ATP</name>
        <dbReference type="ChEBI" id="CHEBI:30616"/>
    </ligand>
</feature>
<comment type="function">
    <text evidence="1">Catalyzes the specific phosphorylation of 1,6-anhydro-N-acetylmuramic acid (anhMurNAc) with the simultaneous cleavage of the 1,6-anhydro ring, generating MurNAc-6-P. Is required for the utilization of anhMurNAc either imported from the medium or derived from its own cell wall murein, and thus plays a role in cell wall recycling.</text>
</comment>
<comment type="catalytic activity">
    <reaction evidence="1">
        <text>1,6-anhydro-N-acetyl-beta-muramate + ATP + H2O = N-acetyl-D-muramate 6-phosphate + ADP + H(+)</text>
        <dbReference type="Rhea" id="RHEA:24952"/>
        <dbReference type="ChEBI" id="CHEBI:15377"/>
        <dbReference type="ChEBI" id="CHEBI:15378"/>
        <dbReference type="ChEBI" id="CHEBI:30616"/>
        <dbReference type="ChEBI" id="CHEBI:58690"/>
        <dbReference type="ChEBI" id="CHEBI:58722"/>
        <dbReference type="ChEBI" id="CHEBI:456216"/>
        <dbReference type="EC" id="2.7.1.170"/>
    </reaction>
</comment>
<comment type="pathway">
    <text evidence="1">Amino-sugar metabolism; 1,6-anhydro-N-acetylmuramate degradation.</text>
</comment>
<comment type="pathway">
    <text evidence="1">Cell wall biogenesis; peptidoglycan recycling.</text>
</comment>
<comment type="similarity">
    <text evidence="1">Belongs to the anhydro-N-acetylmuramic acid kinase family.</text>
</comment>
<protein>
    <recommendedName>
        <fullName evidence="1">Anhydro-N-acetylmuramic acid kinase</fullName>
        <ecNumber evidence="1">2.7.1.170</ecNumber>
    </recommendedName>
    <alternativeName>
        <fullName evidence="1">AnhMurNAc kinase</fullName>
    </alternativeName>
</protein>
<evidence type="ECO:0000255" key="1">
    <source>
        <dbReference type="HAMAP-Rule" id="MF_01270"/>
    </source>
</evidence>
<sequence length="369" mass="39588">MSKDYFIGLMSGTSMDGVDAVLVQFSQGEATLVERHSQAIPKHTLSGLQRLCLPGSDEITRLGQLDRSVGLLFASAVNALLEKAGVSKEQVVAIGSHGQTVRHMPNLDMGFTLQIGDPNTIAVETGIDVIADFRRKDIALGGQGAPLVPAFHQQMFSKPDTNRIILNIGGISNVTYLPGNSQAVVGFDTGPGNTLIDAWIQQVKHEAYDKDGAWAASGETDEKLLMYLLSHSYFSMGFPKSTGRELFNQAWLEQQTAAFGHLSEADIQSTLLDVTCHSIAKDVLTLSADGELFVCGGGAFNRELMSRLHNLLPSYQIDSTASLGMNPQWVEGIAFAWLAMRHNQGLSGNLPAVTGASREAVLGSLFPAA</sequence>